<proteinExistence type="inferred from homology"/>
<reference key="1">
    <citation type="journal article" date="2002" name="Proc. Natl. Acad. Sci. U.S.A.">
        <title>The genome sequence of the facultative intracellular pathogen Brucella melitensis.</title>
        <authorList>
            <person name="DelVecchio V.G."/>
            <person name="Kapatral V."/>
            <person name="Redkar R.J."/>
            <person name="Patra G."/>
            <person name="Mujer C."/>
            <person name="Los T."/>
            <person name="Ivanova N."/>
            <person name="Anderson I."/>
            <person name="Bhattacharyya A."/>
            <person name="Lykidis A."/>
            <person name="Reznik G."/>
            <person name="Jablonski L."/>
            <person name="Larsen N."/>
            <person name="D'Souza M."/>
            <person name="Bernal A."/>
            <person name="Mazur M."/>
            <person name="Goltsman E."/>
            <person name="Selkov E."/>
            <person name="Elzer P.H."/>
            <person name="Hagius S."/>
            <person name="O'Callaghan D."/>
            <person name="Letesson J.-J."/>
            <person name="Haselkorn R."/>
            <person name="Kyrpides N.C."/>
            <person name="Overbeek R."/>
        </authorList>
    </citation>
    <scope>NUCLEOTIDE SEQUENCE [LARGE SCALE GENOMIC DNA]</scope>
    <source>
        <strain>ATCC 23456 / CCUG 17765 / NCTC 10094 / 16M</strain>
    </source>
</reference>
<organism>
    <name type="scientific">Brucella melitensis biotype 1 (strain ATCC 23456 / CCUG 17765 / NCTC 10094 / 16M)</name>
    <dbReference type="NCBI Taxonomy" id="224914"/>
    <lineage>
        <taxon>Bacteria</taxon>
        <taxon>Pseudomonadati</taxon>
        <taxon>Pseudomonadota</taxon>
        <taxon>Alphaproteobacteria</taxon>
        <taxon>Hyphomicrobiales</taxon>
        <taxon>Brucellaceae</taxon>
        <taxon>Brucella/Ochrobactrum group</taxon>
        <taxon>Brucella</taxon>
    </lineage>
</organism>
<gene>
    <name type="ordered locus">BMEII0207/BMEII0208</name>
</gene>
<evidence type="ECO:0000250" key="1"/>
<evidence type="ECO:0000255" key="2">
    <source>
        <dbReference type="PROSITE-ProRule" id="PRU00441"/>
    </source>
</evidence>
<evidence type="ECO:0000305" key="3"/>
<feature type="chain" id="PRO_0000290150" description="Putative peptide transport system permease protein BMEII0207/BMEII0208">
    <location>
        <begin position="1"/>
        <end position="296"/>
    </location>
</feature>
<feature type="transmembrane region" description="Helical" evidence="2">
    <location>
        <begin position="35"/>
        <end position="55"/>
    </location>
</feature>
<feature type="transmembrane region" description="Helical" evidence="2">
    <location>
        <begin position="97"/>
        <end position="117"/>
    </location>
</feature>
<feature type="transmembrane region" description="Helical" evidence="2">
    <location>
        <begin position="131"/>
        <end position="151"/>
    </location>
</feature>
<feature type="transmembrane region" description="Helical" evidence="2">
    <location>
        <begin position="205"/>
        <end position="225"/>
    </location>
</feature>
<feature type="transmembrane region" description="Helical" evidence="2">
    <location>
        <begin position="229"/>
        <end position="249"/>
    </location>
</feature>
<feature type="transmembrane region" description="Helical" evidence="2">
    <location>
        <begin position="260"/>
        <end position="280"/>
    </location>
</feature>
<feature type="domain" description="ABC transmembrane type-1" evidence="2">
    <location>
        <begin position="97"/>
        <end position="281"/>
    </location>
</feature>
<name>Y207_BRUME</name>
<accession>Q8YDG8</accession>
<accession>Q8YDG9</accession>
<comment type="function">
    <text evidence="1">Probably part of an ABC transporter complex that could be involved in peptide import. Probably responsible for the translocation of the substrate across the membrane (By similarity).</text>
</comment>
<comment type="subunit">
    <text evidence="3">The complex is composed of two ATP-binding proteins (BMEII0205 and BMEII0206), two transmembrane proteins (BMEII0207/BMEII0208 and BMEII0209) and a solute-binding protein (BMEII0210).</text>
</comment>
<comment type="subcellular location">
    <subcellularLocation>
        <location evidence="3">Cell inner membrane</location>
        <topology evidence="2">Multi-pass membrane protein</topology>
    </subcellularLocation>
</comment>
<comment type="similarity">
    <text evidence="3">Belongs to the binding-protein-dependent transport system permease family.</text>
</comment>
<comment type="sequence caution" evidence="3">
    <conflict type="miscellaneous discrepancy">
        <sequence resource="EMBL-CDS" id="AAL53448"/>
    </conflict>
</comment>
<comment type="sequence caution" evidence="3">
    <conflict type="miscellaneous discrepancy">
        <sequence resource="EMBL-CDS" id="AAL53449"/>
    </conflict>
</comment>
<keyword id="KW-0997">Cell inner membrane</keyword>
<keyword id="KW-1003">Cell membrane</keyword>
<keyword id="KW-0472">Membrane</keyword>
<keyword id="KW-0812">Transmembrane</keyword>
<keyword id="KW-1133">Transmembrane helix</keyword>
<keyword id="KW-0813">Transport</keyword>
<sequence>MTELASPTSFSMPDIGKSPVVLTARRLMRHRSFRIGLVLLLIVVLAAVLAPWITNGKPNATSVRMRFQPPGLEHLFGTDNFGRDLWTRVLYGAQVSLWIGLTVAVLSAILGAIIGIAAAWYRRFDTLLMRVMDALMAFPAILLAIGISAALGPHLSSVIIALTSAYIPRCARIVRASALVLRETDYVDAARLAGASDLRIITRHILPNCLAPLLVTLTFVFAYAILAEATLSFLGIGTPPPHASWGSIVAQGRDYSVDAWWIMLFPGIAITISALAINLIGDGLRDVLDPRLKMEG</sequence>
<protein>
    <recommendedName>
        <fullName>Putative peptide transport system permease protein BMEII0207/BMEII0208</fullName>
    </recommendedName>
</protein>
<dbReference type="EMBL" id="AE008918">
    <property type="protein sequence ID" value="AAL53448.1"/>
    <property type="status" value="ALT_SEQ"/>
    <property type="molecule type" value="Genomic_DNA"/>
</dbReference>
<dbReference type="EMBL" id="AE008918">
    <property type="protein sequence ID" value="AAL53449.1"/>
    <property type="status" value="ALT_SEQ"/>
    <property type="molecule type" value="Genomic_DNA"/>
</dbReference>
<dbReference type="PIR" id="AE3535">
    <property type="entry name" value="AE3535"/>
</dbReference>
<dbReference type="PIR" id="AF3535">
    <property type="entry name" value="AF3535"/>
</dbReference>
<dbReference type="SMR" id="Q8YDG8"/>
<dbReference type="KEGG" id="bme:BMEII0207"/>
<dbReference type="KEGG" id="bme:BMEII0208"/>
<dbReference type="eggNOG" id="COG1173">
    <property type="taxonomic scope" value="Bacteria"/>
</dbReference>
<dbReference type="Proteomes" id="UP000000419">
    <property type="component" value="Chromosome II"/>
</dbReference>
<dbReference type="GO" id="GO:0005886">
    <property type="term" value="C:plasma membrane"/>
    <property type="evidence" value="ECO:0007669"/>
    <property type="project" value="UniProtKB-SubCell"/>
</dbReference>
<dbReference type="GO" id="GO:0055085">
    <property type="term" value="P:transmembrane transport"/>
    <property type="evidence" value="ECO:0007669"/>
    <property type="project" value="InterPro"/>
</dbReference>
<dbReference type="CDD" id="cd06261">
    <property type="entry name" value="TM_PBP2"/>
    <property type="match status" value="1"/>
</dbReference>
<dbReference type="Gene3D" id="1.10.3720.10">
    <property type="entry name" value="MetI-like"/>
    <property type="match status" value="1"/>
</dbReference>
<dbReference type="InterPro" id="IPR050366">
    <property type="entry name" value="BP-dependent_transpt_permease"/>
</dbReference>
<dbReference type="InterPro" id="IPR000515">
    <property type="entry name" value="MetI-like"/>
</dbReference>
<dbReference type="InterPro" id="IPR035906">
    <property type="entry name" value="MetI-like_sf"/>
</dbReference>
<dbReference type="InterPro" id="IPR025966">
    <property type="entry name" value="OppC_N"/>
</dbReference>
<dbReference type="PANTHER" id="PTHR43386">
    <property type="entry name" value="OLIGOPEPTIDE TRANSPORT SYSTEM PERMEASE PROTEIN APPC"/>
    <property type="match status" value="1"/>
</dbReference>
<dbReference type="PANTHER" id="PTHR43386:SF25">
    <property type="entry name" value="PEPTIDE ABC TRANSPORTER PERMEASE PROTEIN"/>
    <property type="match status" value="1"/>
</dbReference>
<dbReference type="Pfam" id="PF00528">
    <property type="entry name" value="BPD_transp_1"/>
    <property type="match status" value="1"/>
</dbReference>
<dbReference type="Pfam" id="PF12911">
    <property type="entry name" value="OppC_N"/>
    <property type="match status" value="1"/>
</dbReference>
<dbReference type="SUPFAM" id="SSF161098">
    <property type="entry name" value="MetI-like"/>
    <property type="match status" value="1"/>
</dbReference>
<dbReference type="PROSITE" id="PS50928">
    <property type="entry name" value="ABC_TM1"/>
    <property type="match status" value="1"/>
</dbReference>